<dbReference type="EC" id="1.1.1.205" evidence="1"/>
<dbReference type="EMBL" id="M97794">
    <property type="protein sequence ID" value="AAB46420.1"/>
    <property type="molecule type" value="Genomic_DNA"/>
</dbReference>
<dbReference type="PIR" id="A55407">
    <property type="entry name" value="A55407"/>
</dbReference>
<dbReference type="PDB" id="6RFU">
    <property type="method" value="X-ray"/>
    <property type="resolution" value="2.80 A"/>
    <property type="chains" value="A/B=1-512"/>
</dbReference>
<dbReference type="PDB" id="8C51">
    <property type="method" value="X-ray"/>
    <property type="resolution" value="2.40 A"/>
    <property type="chains" value="A/B=2-509"/>
</dbReference>
<dbReference type="PDB" id="8C53">
    <property type="method" value="X-ray"/>
    <property type="resolution" value="2.30 A"/>
    <property type="chains" value="A/B=1-512"/>
</dbReference>
<dbReference type="PDB" id="8CGY">
    <property type="method" value="X-ray"/>
    <property type="resolution" value="3.00 A"/>
    <property type="chains" value="A/B=1-512"/>
</dbReference>
<dbReference type="PDBsum" id="6RFU"/>
<dbReference type="PDBsum" id="8C51"/>
<dbReference type="PDBsum" id="8C53"/>
<dbReference type="PDBsum" id="8CGY"/>
<dbReference type="SASBDB" id="P50098"/>
<dbReference type="SMR" id="P50098"/>
<dbReference type="BRENDA" id="1.1.1.205">
    <property type="organism ID" value="6519"/>
</dbReference>
<dbReference type="UniPathway" id="UPA00601">
    <property type="reaction ID" value="UER00295"/>
</dbReference>
<dbReference type="GO" id="GO:0020015">
    <property type="term" value="C:glycosome"/>
    <property type="evidence" value="ECO:0007669"/>
    <property type="project" value="UniProtKB-SubCell"/>
</dbReference>
<dbReference type="GO" id="GO:0003938">
    <property type="term" value="F:IMP dehydrogenase activity"/>
    <property type="evidence" value="ECO:0007669"/>
    <property type="project" value="UniProtKB-UniRule"/>
</dbReference>
<dbReference type="GO" id="GO:0046872">
    <property type="term" value="F:metal ion binding"/>
    <property type="evidence" value="ECO:0007669"/>
    <property type="project" value="UniProtKB-UniRule"/>
</dbReference>
<dbReference type="GO" id="GO:0000166">
    <property type="term" value="F:nucleotide binding"/>
    <property type="evidence" value="ECO:0007669"/>
    <property type="project" value="UniProtKB-UniRule"/>
</dbReference>
<dbReference type="GO" id="GO:0006177">
    <property type="term" value="P:GMP biosynthetic process"/>
    <property type="evidence" value="ECO:0007669"/>
    <property type="project" value="UniProtKB-UniRule"/>
</dbReference>
<dbReference type="GO" id="GO:0006183">
    <property type="term" value="P:GTP biosynthetic process"/>
    <property type="evidence" value="ECO:0007669"/>
    <property type="project" value="TreeGrafter"/>
</dbReference>
<dbReference type="CDD" id="cd04601">
    <property type="entry name" value="CBS_pair_IMPDH"/>
    <property type="match status" value="1"/>
</dbReference>
<dbReference type="CDD" id="cd00381">
    <property type="entry name" value="IMPDH"/>
    <property type="match status" value="1"/>
</dbReference>
<dbReference type="FunFam" id="3.20.20.70:FF:000086">
    <property type="entry name" value="IMP dehydrogenase, putative"/>
    <property type="match status" value="1"/>
</dbReference>
<dbReference type="Gene3D" id="3.20.20.70">
    <property type="entry name" value="Aldolase class I"/>
    <property type="match status" value="1"/>
</dbReference>
<dbReference type="HAMAP" id="MF_01964">
    <property type="entry name" value="IMPDH"/>
    <property type="match status" value="1"/>
</dbReference>
<dbReference type="InterPro" id="IPR013785">
    <property type="entry name" value="Aldolase_TIM"/>
</dbReference>
<dbReference type="InterPro" id="IPR000644">
    <property type="entry name" value="CBS_dom"/>
</dbReference>
<dbReference type="InterPro" id="IPR005990">
    <property type="entry name" value="IMP_DH"/>
</dbReference>
<dbReference type="InterPro" id="IPR015875">
    <property type="entry name" value="IMP_DH/GMP_Rdtase_CS"/>
</dbReference>
<dbReference type="InterPro" id="IPR001093">
    <property type="entry name" value="IMP_DH_GMPRt"/>
</dbReference>
<dbReference type="NCBIfam" id="TIGR01302">
    <property type="entry name" value="IMP_dehydrog"/>
    <property type="match status" value="1"/>
</dbReference>
<dbReference type="PANTHER" id="PTHR11911:SF111">
    <property type="entry name" value="INOSINE-5'-MONOPHOSPHATE DEHYDROGENASE"/>
    <property type="match status" value="1"/>
</dbReference>
<dbReference type="PANTHER" id="PTHR11911">
    <property type="entry name" value="INOSINE-5-MONOPHOSPHATE DEHYDROGENASE RELATED"/>
    <property type="match status" value="1"/>
</dbReference>
<dbReference type="Pfam" id="PF00571">
    <property type="entry name" value="CBS"/>
    <property type="match status" value="2"/>
</dbReference>
<dbReference type="Pfam" id="PF00478">
    <property type="entry name" value="IMPDH"/>
    <property type="match status" value="1"/>
</dbReference>
<dbReference type="PIRSF" id="PIRSF000130">
    <property type="entry name" value="IMPDH"/>
    <property type="match status" value="1"/>
</dbReference>
<dbReference type="SMART" id="SM00116">
    <property type="entry name" value="CBS"/>
    <property type="match status" value="2"/>
</dbReference>
<dbReference type="SMART" id="SM01240">
    <property type="entry name" value="IMPDH"/>
    <property type="match status" value="1"/>
</dbReference>
<dbReference type="SUPFAM" id="SSF51412">
    <property type="entry name" value="Inosine monophosphate dehydrogenase (IMPDH)"/>
    <property type="match status" value="2"/>
</dbReference>
<dbReference type="PROSITE" id="PS51371">
    <property type="entry name" value="CBS"/>
    <property type="match status" value="2"/>
</dbReference>
<dbReference type="PROSITE" id="PS00487">
    <property type="entry name" value="IMP_DH_GMP_RED"/>
    <property type="match status" value="1"/>
</dbReference>
<organism>
    <name type="scientific">Trypanosoma brucei brucei</name>
    <dbReference type="NCBI Taxonomy" id="5702"/>
    <lineage>
        <taxon>Eukaryota</taxon>
        <taxon>Discoba</taxon>
        <taxon>Euglenozoa</taxon>
        <taxon>Kinetoplastea</taxon>
        <taxon>Metakinetoplastina</taxon>
        <taxon>Trypanosomatida</taxon>
        <taxon>Trypanosomatidae</taxon>
        <taxon>Trypanosoma</taxon>
    </lineage>
</organism>
<keyword id="KW-0002">3D-structure</keyword>
<keyword id="KW-0129">CBS domain</keyword>
<keyword id="KW-0327">Glycosome</keyword>
<keyword id="KW-0332">GMP biosynthesis</keyword>
<keyword id="KW-0479">Metal-binding</keyword>
<keyword id="KW-0520">NAD</keyword>
<keyword id="KW-0560">Oxidoreductase</keyword>
<keyword id="KW-0576">Peroxisome</keyword>
<keyword id="KW-0630">Potassium</keyword>
<keyword id="KW-0658">Purine biosynthesis</keyword>
<keyword id="KW-0677">Repeat</keyword>
<comment type="function">
    <text evidence="1">Catalyzes the conversion of inosine 5'-phosphate (IMP) to xanthosine 5'-phosphate (XMP), the first committed and rate-limiting step in the de novo synthesis of guanine nucleotides, and therefore plays an important role in the regulation of cell growth.</text>
</comment>
<comment type="catalytic activity">
    <reaction evidence="1">
        <text>IMP + NAD(+) + H2O = XMP + NADH + H(+)</text>
        <dbReference type="Rhea" id="RHEA:11708"/>
        <dbReference type="ChEBI" id="CHEBI:15377"/>
        <dbReference type="ChEBI" id="CHEBI:15378"/>
        <dbReference type="ChEBI" id="CHEBI:57464"/>
        <dbReference type="ChEBI" id="CHEBI:57540"/>
        <dbReference type="ChEBI" id="CHEBI:57945"/>
        <dbReference type="ChEBI" id="CHEBI:58053"/>
        <dbReference type="EC" id="1.1.1.205"/>
    </reaction>
</comment>
<comment type="cofactor">
    <cofactor evidence="1">
        <name>K(+)</name>
        <dbReference type="ChEBI" id="CHEBI:29103"/>
    </cofactor>
</comment>
<comment type="activity regulation">
    <text evidence="1">Mycophenolic acid (MPA) is a non-competitive inhibitor that prevents formation of the closed enzyme conformation by binding to the same site as the amobile flap. In contrast, mizoribine monophosphate (MZP) is a competitive inhibitor that induces the closed conformation. MPA is a potent inhibitor of mammalian IMPDHs but a poor inhibitor of the bacterial enzymes. MZP is a more potent inhibitor of bacterial IMPDH.</text>
</comment>
<comment type="pathway">
    <text evidence="1">Purine metabolism; XMP biosynthesis via de novo pathway; XMP from IMP: step 1/1.</text>
</comment>
<comment type="subunit">
    <text evidence="1">Homotetramer.</text>
</comment>
<comment type="subcellular location">
    <subcellularLocation>
        <location evidence="1">Glycosome</location>
    </subcellularLocation>
</comment>
<comment type="similarity">
    <text evidence="1">Belongs to the IMPDH/GMPR family.</text>
</comment>
<proteinExistence type="evidence at protein level"/>
<reference key="1">
    <citation type="journal article" date="1994" name="J. Biol. Chem.">
        <title>Amplification of the inosinate dehydrogenase gene in Trypanosoma brucei gambiense due to an increase in chromosome copy number.</title>
        <authorList>
            <person name="Wilson K."/>
            <person name="Berens R.L."/>
            <person name="Sifri C.D."/>
            <person name="Ullman B."/>
        </authorList>
    </citation>
    <scope>NUCLEOTIDE SEQUENCE [GENOMIC DNA]</scope>
    <source>
        <strain>Eatro 164 / ISTat 1.7</strain>
    </source>
</reference>
<accession>P50098</accession>
<feature type="chain" id="PRO_0000093677" description="Inosine-5'-monophosphate dehydrogenase">
    <location>
        <begin position="1"/>
        <end position="512"/>
    </location>
</feature>
<feature type="domain" description="CBS 1" evidence="1">
    <location>
        <begin position="110"/>
        <end position="169"/>
    </location>
</feature>
<feature type="domain" description="CBS 2" evidence="1">
    <location>
        <begin position="173"/>
        <end position="231"/>
    </location>
</feature>
<feature type="short sequence motif" description="Microbody targeting signal" evidence="1">
    <location>
        <begin position="510"/>
        <end position="512"/>
    </location>
</feature>
<feature type="active site" description="Thioimidate intermediate" evidence="1">
    <location>
        <position position="325"/>
    </location>
</feature>
<feature type="active site" description="Proton acceptor" evidence="1">
    <location>
        <position position="423"/>
    </location>
</feature>
<feature type="binding site" evidence="1">
    <location>
        <begin position="268"/>
        <end position="270"/>
    </location>
    <ligand>
        <name>NAD(+)</name>
        <dbReference type="ChEBI" id="CHEBI:57540"/>
    </ligand>
</feature>
<feature type="binding site" evidence="1">
    <location>
        <begin position="318"/>
        <end position="320"/>
    </location>
    <ligand>
        <name>NAD(+)</name>
        <dbReference type="ChEBI" id="CHEBI:57540"/>
    </ligand>
</feature>
<feature type="binding site" description="in other chain" evidence="1">
    <location>
        <position position="320"/>
    </location>
    <ligand>
        <name>K(+)</name>
        <dbReference type="ChEBI" id="CHEBI:29103"/>
        <note>ligand shared between two tetrameric partners</note>
    </ligand>
</feature>
<feature type="binding site" description="in other chain" evidence="1">
    <location>
        <position position="322"/>
    </location>
    <ligand>
        <name>K(+)</name>
        <dbReference type="ChEBI" id="CHEBI:29103"/>
        <note>ligand shared between two tetrameric partners</note>
    </ligand>
</feature>
<feature type="binding site" evidence="1">
    <location>
        <position position="323"/>
    </location>
    <ligand>
        <name>IMP</name>
        <dbReference type="ChEBI" id="CHEBI:58053"/>
    </ligand>
</feature>
<feature type="binding site" description="in other chain" evidence="1">
    <location>
        <position position="325"/>
    </location>
    <ligand>
        <name>K(+)</name>
        <dbReference type="ChEBI" id="CHEBI:29103"/>
        <note>ligand shared between two tetrameric partners</note>
    </ligand>
</feature>
<feature type="binding site" evidence="1">
    <location>
        <begin position="358"/>
        <end position="360"/>
    </location>
    <ligand>
        <name>IMP</name>
        <dbReference type="ChEBI" id="CHEBI:58053"/>
    </ligand>
</feature>
<feature type="binding site" evidence="1">
    <location>
        <begin position="381"/>
        <end position="382"/>
    </location>
    <ligand>
        <name>IMP</name>
        <dbReference type="ChEBI" id="CHEBI:58053"/>
    </ligand>
</feature>
<feature type="binding site" evidence="1">
    <location>
        <begin position="405"/>
        <end position="409"/>
    </location>
    <ligand>
        <name>IMP</name>
        <dbReference type="ChEBI" id="CHEBI:58053"/>
    </ligand>
</feature>
<feature type="binding site" evidence="1">
    <location>
        <position position="435"/>
    </location>
    <ligand>
        <name>IMP</name>
        <dbReference type="ChEBI" id="CHEBI:58053"/>
    </ligand>
</feature>
<feature type="binding site" evidence="1">
    <location>
        <position position="494"/>
    </location>
    <ligand>
        <name>K(+)</name>
        <dbReference type="ChEBI" id="CHEBI:29103"/>
        <note>ligand shared between two tetrameric partners</note>
    </ligand>
</feature>
<feature type="binding site" evidence="1">
    <location>
        <position position="495"/>
    </location>
    <ligand>
        <name>K(+)</name>
        <dbReference type="ChEBI" id="CHEBI:29103"/>
        <note>ligand shared between two tetrameric partners</note>
    </ligand>
</feature>
<feature type="helix" evidence="2">
    <location>
        <begin position="4"/>
        <end position="7"/>
    </location>
</feature>
<feature type="helix" evidence="2">
    <location>
        <begin position="17"/>
        <end position="20"/>
    </location>
</feature>
<feature type="strand" evidence="2">
    <location>
        <begin position="22"/>
        <end position="24"/>
    </location>
</feature>
<feature type="helix" evidence="2">
    <location>
        <begin position="28"/>
        <end position="30"/>
    </location>
</feature>
<feature type="strand" evidence="2">
    <location>
        <begin position="31"/>
        <end position="33"/>
    </location>
</feature>
<feature type="helix" evidence="2">
    <location>
        <begin position="42"/>
        <end position="44"/>
    </location>
</feature>
<feature type="strand" evidence="2">
    <location>
        <begin position="49"/>
        <end position="54"/>
    </location>
</feature>
<feature type="strand" evidence="2">
    <location>
        <begin position="56"/>
        <end position="59"/>
    </location>
</feature>
<feature type="strand" evidence="2">
    <location>
        <begin position="61"/>
        <end position="63"/>
    </location>
</feature>
<feature type="turn" evidence="2">
    <location>
        <begin position="67"/>
        <end position="69"/>
    </location>
</feature>
<feature type="helix" evidence="2">
    <location>
        <begin position="72"/>
        <end position="80"/>
    </location>
</feature>
<feature type="strand" evidence="2">
    <location>
        <begin position="84"/>
        <end position="87"/>
    </location>
</feature>
<feature type="strand" evidence="3">
    <location>
        <begin position="89"/>
        <end position="91"/>
    </location>
</feature>
<feature type="helix" evidence="2">
    <location>
        <begin position="93"/>
        <end position="104"/>
    </location>
</feature>
<feature type="strand" evidence="2">
    <location>
        <begin position="109"/>
        <end position="113"/>
    </location>
</feature>
<feature type="helix" evidence="2">
    <location>
        <begin position="123"/>
        <end position="133"/>
    </location>
</feature>
<feature type="strand" evidence="2">
    <location>
        <begin position="138"/>
        <end position="141"/>
    </location>
</feature>
<feature type="helix" evidence="2">
    <location>
        <begin position="142"/>
        <end position="144"/>
    </location>
</feature>
<feature type="strand" evidence="2">
    <location>
        <begin position="148"/>
        <end position="154"/>
    </location>
</feature>
<feature type="helix" evidence="2">
    <location>
        <begin position="156"/>
        <end position="159"/>
    </location>
</feature>
<feature type="helix" evidence="2">
    <location>
        <begin position="169"/>
        <end position="171"/>
    </location>
</feature>
<feature type="strand" evidence="2">
    <location>
        <begin position="173"/>
        <end position="175"/>
    </location>
</feature>
<feature type="helix" evidence="2">
    <location>
        <begin position="176"/>
        <end position="178"/>
    </location>
</feature>
<feature type="strand" evidence="2">
    <location>
        <begin position="182"/>
        <end position="185"/>
    </location>
</feature>
<feature type="helix" evidence="2">
    <location>
        <begin position="188"/>
        <end position="198"/>
    </location>
</feature>
<feature type="strand" evidence="2">
    <location>
        <begin position="201"/>
        <end position="206"/>
    </location>
</feature>
<feature type="strand" evidence="2">
    <location>
        <begin position="210"/>
        <end position="217"/>
    </location>
</feature>
<feature type="helix" evidence="2">
    <location>
        <begin position="218"/>
        <end position="226"/>
    </location>
</feature>
<feature type="strand" evidence="2">
    <location>
        <begin position="241"/>
        <end position="244"/>
    </location>
</feature>
<feature type="helix" evidence="2">
    <location>
        <begin position="250"/>
        <end position="260"/>
    </location>
</feature>
<feature type="strand" evidence="2">
    <location>
        <begin position="263"/>
        <end position="267"/>
    </location>
</feature>
<feature type="helix" evidence="2">
    <location>
        <begin position="275"/>
        <end position="287"/>
    </location>
</feature>
<feature type="strand" evidence="2">
    <location>
        <begin position="292"/>
        <end position="298"/>
    </location>
</feature>
<feature type="helix" evidence="2">
    <location>
        <begin position="301"/>
        <end position="310"/>
    </location>
</feature>
<feature type="strand" evidence="2">
    <location>
        <begin position="313"/>
        <end position="317"/>
    </location>
</feature>
<feature type="helix" evidence="2">
    <location>
        <begin position="337"/>
        <end position="350"/>
    </location>
</feature>
<feature type="strand" evidence="2">
    <location>
        <begin position="355"/>
        <end position="359"/>
    </location>
</feature>
<feature type="helix" evidence="2">
    <location>
        <begin position="364"/>
        <end position="372"/>
    </location>
</feature>
<feature type="strand" evidence="2">
    <location>
        <begin position="376"/>
        <end position="381"/>
    </location>
</feature>
<feature type="helix" evidence="2">
    <location>
        <begin position="382"/>
        <end position="384"/>
    </location>
</feature>
<feature type="strand" evidence="2">
    <location>
        <begin position="390"/>
        <end position="397"/>
    </location>
</feature>
<feature type="strand" evidence="2">
    <location>
        <begin position="400"/>
        <end position="404"/>
    </location>
</feature>
<feature type="helix" evidence="2">
    <location>
        <begin position="447"/>
        <end position="465"/>
    </location>
</feature>
<feature type="helix" evidence="2">
    <location>
        <begin position="470"/>
        <end position="478"/>
    </location>
</feature>
<feature type="strand" evidence="2">
    <location>
        <begin position="484"/>
        <end position="486"/>
    </location>
</feature>
<feature type="helix" evidence="2">
    <location>
        <begin position="490"/>
        <end position="492"/>
    </location>
</feature>
<protein>
    <recommendedName>
        <fullName evidence="1">Inosine-5'-monophosphate dehydrogenase</fullName>
        <shortName evidence="1">IMP dehydrogenase</shortName>
        <shortName evidence="1">IMPD</shortName>
        <shortName evidence="1">IMPDH</shortName>
        <ecNumber evidence="1">1.1.1.205</ecNumber>
    </recommendedName>
</protein>
<evidence type="ECO:0000255" key="1">
    <source>
        <dbReference type="HAMAP-Rule" id="MF_03156"/>
    </source>
</evidence>
<evidence type="ECO:0007829" key="2">
    <source>
        <dbReference type="PDB" id="8C53"/>
    </source>
</evidence>
<evidence type="ECO:0007829" key="3">
    <source>
        <dbReference type="PDB" id="8CGY"/>
    </source>
</evidence>
<name>IMDH_TRYBB</name>
<sequence length="512" mass="55709">MENTNLRTKTLRDGTTAEELFSQDGLSFNDFIILPGFIDFDSSKVNVSGQFTKNILLHLPLVSSPMDTVTESSMARAMALMGGIGVIHNNCTVEQQARMVRSVKLYRNGFIMKPKSVSPDVPVSTIRNIKSEKGISGILVTEGGKYDGKLLGIVCTKDIDFVKDASAPVSQYMTRRENMTVERYPIKLEEAMDVLNRSRHGYLPVLNDKDEVVCLCSRRDAVRARDYPNSSLDRNGHLLCAAATSTREADKGRVAALSEAGIDVLVLDSSQGNTIYQVSFIRWVKKTYPHLEVVAGNVVTQDQAKNLIDAGADSLRIGMGSGSICITQEVLACGRPQATAIYKVARYAASRGVPCVADGGLRNVGDVCKALAVGANVAMLGSMIAGTSETPGEYFFKDGMRLKGYRGMGSIDAMLQGRESGKRYLSENETLQVAQGVAGAVLDKGSVLKLLAYIHKGLQQSAQDIGEVSFDAIREKVYEGQVLFNRRTLTAQSEGAVHSLHHYERKLFASKL</sequence>